<protein>
    <recommendedName>
        <fullName>cAMP-dependent protein kinase regulatory subunit</fullName>
        <shortName>PKA regulatory subunit</shortName>
    </recommendedName>
</protein>
<accession>Q6BZG7</accession>
<feature type="chain" id="PRO_0000205407" description="cAMP-dependent protein kinase regulatory subunit">
    <location>
        <begin position="1"/>
        <end position="452"/>
    </location>
</feature>
<feature type="region of interest" description="Dimerization and phosphorylation" evidence="2">
    <location>
        <begin position="28"/>
        <end position="212"/>
    </location>
</feature>
<feature type="region of interest" description="Disordered" evidence="3">
    <location>
        <begin position="74"/>
        <end position="163"/>
    </location>
</feature>
<feature type="compositionally biased region" description="Polar residues" evidence="3">
    <location>
        <begin position="75"/>
        <end position="84"/>
    </location>
</feature>
<feature type="compositionally biased region" description="Basic and acidic residues" evidence="3">
    <location>
        <begin position="95"/>
        <end position="106"/>
    </location>
</feature>
<feature type="binding site">
    <location>
        <begin position="213"/>
        <end position="330"/>
    </location>
    <ligand>
        <name>a nucleoside 3',5'-cyclic phosphate</name>
        <dbReference type="ChEBI" id="CHEBI:58464"/>
        <label>1</label>
    </ligand>
</feature>
<feature type="binding site" evidence="1">
    <location>
        <position position="278"/>
    </location>
    <ligand>
        <name>3',5'-cyclic AMP</name>
        <dbReference type="ChEBI" id="CHEBI:58165"/>
        <label>1</label>
    </ligand>
</feature>
<feature type="binding site" evidence="1">
    <location>
        <position position="287"/>
    </location>
    <ligand>
        <name>3',5'-cyclic AMP</name>
        <dbReference type="ChEBI" id="CHEBI:58165"/>
        <label>1</label>
    </ligand>
</feature>
<feature type="binding site">
    <location>
        <begin position="333"/>
        <end position="451"/>
    </location>
    <ligand>
        <name>a nucleoside 3',5'-cyclic phosphate</name>
        <dbReference type="ChEBI" id="CHEBI:58464"/>
        <label>2</label>
    </ligand>
</feature>
<feature type="binding site" evidence="1">
    <location>
        <position position="399"/>
    </location>
    <ligand>
        <name>3',5'-cyclic AMP</name>
        <dbReference type="ChEBI" id="CHEBI:58165"/>
        <label>2</label>
    </ligand>
</feature>
<feature type="binding site" evidence="1">
    <location>
        <position position="408"/>
    </location>
    <ligand>
        <name>3',5'-cyclic AMP</name>
        <dbReference type="ChEBI" id="CHEBI:58165"/>
        <label>2</label>
    </ligand>
</feature>
<feature type="modified residue" description="Phosphoserine" evidence="1">
    <location>
        <position position="173"/>
    </location>
</feature>
<comment type="subunit">
    <text evidence="1">Tetramer, composed of 2 regulatory (R) and 2 catalytic (C) subunits. In the presence of cAMP it dissociates into 2 active monomeric C subunits and an R dimer (By similarity).</text>
</comment>
<comment type="similarity">
    <text evidence="4">Belongs to the cAMP-dependent kinase regulatory chain family.</text>
</comment>
<dbReference type="EMBL" id="CR382133">
    <property type="protein sequence ID" value="CAG84354.2"/>
    <property type="molecule type" value="Genomic_DNA"/>
</dbReference>
<dbReference type="RefSeq" id="XP_456402.2">
    <property type="nucleotide sequence ID" value="XM_456402.1"/>
</dbReference>
<dbReference type="SMR" id="Q6BZG7"/>
<dbReference type="FunCoup" id="Q6BZG7">
    <property type="interactions" value="475"/>
</dbReference>
<dbReference type="STRING" id="284592.Q6BZG7"/>
<dbReference type="GeneID" id="2899621"/>
<dbReference type="KEGG" id="dha:DEHA2A01474g"/>
<dbReference type="VEuPathDB" id="FungiDB:DEHA2A01474g"/>
<dbReference type="eggNOG" id="KOG1113">
    <property type="taxonomic scope" value="Eukaryota"/>
</dbReference>
<dbReference type="HOGENOM" id="CLU_018310_0_1_1"/>
<dbReference type="InParanoid" id="Q6BZG7"/>
<dbReference type="OMA" id="MPYERSK"/>
<dbReference type="OrthoDB" id="417078at2759"/>
<dbReference type="Proteomes" id="UP000000599">
    <property type="component" value="Chromosome A"/>
</dbReference>
<dbReference type="GO" id="GO:0005952">
    <property type="term" value="C:cAMP-dependent protein kinase complex"/>
    <property type="evidence" value="ECO:0007669"/>
    <property type="project" value="EnsemblFungi"/>
</dbReference>
<dbReference type="GO" id="GO:0000785">
    <property type="term" value="C:chromatin"/>
    <property type="evidence" value="ECO:0007669"/>
    <property type="project" value="EnsemblFungi"/>
</dbReference>
<dbReference type="GO" id="GO:0005829">
    <property type="term" value="C:cytosol"/>
    <property type="evidence" value="ECO:0007669"/>
    <property type="project" value="TreeGrafter"/>
</dbReference>
<dbReference type="GO" id="GO:0005634">
    <property type="term" value="C:nucleus"/>
    <property type="evidence" value="ECO:0007669"/>
    <property type="project" value="EnsemblFungi"/>
</dbReference>
<dbReference type="GO" id="GO:0005886">
    <property type="term" value="C:plasma membrane"/>
    <property type="evidence" value="ECO:0007669"/>
    <property type="project" value="EnsemblFungi"/>
</dbReference>
<dbReference type="GO" id="GO:0030552">
    <property type="term" value="F:cAMP binding"/>
    <property type="evidence" value="ECO:0007669"/>
    <property type="project" value="UniProtKB-KW"/>
</dbReference>
<dbReference type="GO" id="GO:0004862">
    <property type="term" value="F:cAMP-dependent protein kinase inhibitor activity"/>
    <property type="evidence" value="ECO:0007669"/>
    <property type="project" value="EnsemblFungi"/>
</dbReference>
<dbReference type="GO" id="GO:0042802">
    <property type="term" value="F:identical protein binding"/>
    <property type="evidence" value="ECO:0007669"/>
    <property type="project" value="EnsemblFungi"/>
</dbReference>
<dbReference type="GO" id="GO:0034236">
    <property type="term" value="F:protein kinase A catalytic subunit binding"/>
    <property type="evidence" value="ECO:0007669"/>
    <property type="project" value="TreeGrafter"/>
</dbReference>
<dbReference type="GO" id="GO:0007189">
    <property type="term" value="P:adenylate cyclase-activating G protein-coupled receptor signaling pathway"/>
    <property type="evidence" value="ECO:0007669"/>
    <property type="project" value="EnsemblFungi"/>
</dbReference>
<dbReference type="GO" id="GO:0042149">
    <property type="term" value="P:cellular response to glucose starvation"/>
    <property type="evidence" value="ECO:0007669"/>
    <property type="project" value="EnsemblFungi"/>
</dbReference>
<dbReference type="GO" id="GO:0006995">
    <property type="term" value="P:cellular response to nitrogen starvation"/>
    <property type="evidence" value="ECO:0007669"/>
    <property type="project" value="EnsemblFungi"/>
</dbReference>
<dbReference type="GO" id="GO:0046580">
    <property type="term" value="P:negative regulation of Ras protein signal transduction"/>
    <property type="evidence" value="ECO:0007669"/>
    <property type="project" value="EnsemblFungi"/>
</dbReference>
<dbReference type="GO" id="GO:0046827">
    <property type="term" value="P:positive regulation of protein export from nucleus"/>
    <property type="evidence" value="ECO:0007669"/>
    <property type="project" value="EnsemblFungi"/>
</dbReference>
<dbReference type="GO" id="GO:0045944">
    <property type="term" value="P:positive regulation of transcription by RNA polymerase II"/>
    <property type="evidence" value="ECO:0007669"/>
    <property type="project" value="EnsemblFungi"/>
</dbReference>
<dbReference type="GO" id="GO:0097271">
    <property type="term" value="P:protein localization to bud neck"/>
    <property type="evidence" value="ECO:0007669"/>
    <property type="project" value="EnsemblFungi"/>
</dbReference>
<dbReference type="GO" id="GO:0010603">
    <property type="term" value="P:regulation of cytoplasmic mRNA processing body assembly"/>
    <property type="evidence" value="ECO:0007669"/>
    <property type="project" value="EnsemblFungi"/>
</dbReference>
<dbReference type="CDD" id="cd00038">
    <property type="entry name" value="CAP_ED"/>
    <property type="match status" value="2"/>
</dbReference>
<dbReference type="CDD" id="cd12098">
    <property type="entry name" value="DD_R_ScPKA-like"/>
    <property type="match status" value="1"/>
</dbReference>
<dbReference type="FunFam" id="2.60.120.10:FF:000039">
    <property type="entry name" value="cAMP-dependent protein kinase regulatory subunit"/>
    <property type="match status" value="1"/>
</dbReference>
<dbReference type="FunFam" id="2.60.120.10:FF:000118">
    <property type="entry name" value="cAMP-dependent protein kinase regulatory subunit"/>
    <property type="match status" value="1"/>
</dbReference>
<dbReference type="Gene3D" id="2.60.120.10">
    <property type="entry name" value="Jelly Rolls"/>
    <property type="match status" value="2"/>
</dbReference>
<dbReference type="InterPro" id="IPR050503">
    <property type="entry name" value="cAMP-dep_PK_reg_su-like"/>
</dbReference>
<dbReference type="InterPro" id="IPR012198">
    <property type="entry name" value="cAMP_dep_PK_reg_su"/>
</dbReference>
<dbReference type="InterPro" id="IPR003117">
    <property type="entry name" value="cAMP_dep_PK_reg_su_I/II_a/b"/>
</dbReference>
<dbReference type="InterPro" id="IPR018488">
    <property type="entry name" value="cNMP-bd_CS"/>
</dbReference>
<dbReference type="InterPro" id="IPR000595">
    <property type="entry name" value="cNMP-bd_dom"/>
</dbReference>
<dbReference type="InterPro" id="IPR018490">
    <property type="entry name" value="cNMP-bd_dom_sf"/>
</dbReference>
<dbReference type="InterPro" id="IPR014710">
    <property type="entry name" value="RmlC-like_jellyroll"/>
</dbReference>
<dbReference type="PANTHER" id="PTHR11635">
    <property type="entry name" value="CAMP-DEPENDENT PROTEIN KINASE REGULATORY CHAIN"/>
    <property type="match status" value="1"/>
</dbReference>
<dbReference type="PANTHER" id="PTHR11635:SF152">
    <property type="entry name" value="CAMP-DEPENDENT PROTEIN KINASE TYPE I REGULATORY SUBUNIT-RELATED"/>
    <property type="match status" value="1"/>
</dbReference>
<dbReference type="Pfam" id="PF00027">
    <property type="entry name" value="cNMP_binding"/>
    <property type="match status" value="2"/>
</dbReference>
<dbReference type="Pfam" id="PF02197">
    <property type="entry name" value="RIIa"/>
    <property type="match status" value="1"/>
</dbReference>
<dbReference type="PIRSF" id="PIRSF000548">
    <property type="entry name" value="PK_regulatory"/>
    <property type="match status" value="1"/>
</dbReference>
<dbReference type="PRINTS" id="PR00103">
    <property type="entry name" value="CAMPKINASE"/>
</dbReference>
<dbReference type="SMART" id="SM00100">
    <property type="entry name" value="cNMP"/>
    <property type="match status" value="2"/>
</dbReference>
<dbReference type="SMART" id="SM00394">
    <property type="entry name" value="RIIa"/>
    <property type="match status" value="1"/>
</dbReference>
<dbReference type="SUPFAM" id="SSF51206">
    <property type="entry name" value="cAMP-binding domain-like"/>
    <property type="match status" value="2"/>
</dbReference>
<dbReference type="PROSITE" id="PS00888">
    <property type="entry name" value="CNMP_BINDING_1"/>
    <property type="match status" value="2"/>
</dbReference>
<dbReference type="PROSITE" id="PS00889">
    <property type="entry name" value="CNMP_BINDING_2"/>
    <property type="match status" value="2"/>
</dbReference>
<dbReference type="PROSITE" id="PS50042">
    <property type="entry name" value="CNMP_BINDING_3"/>
    <property type="match status" value="2"/>
</dbReference>
<organism>
    <name type="scientific">Debaryomyces hansenii (strain ATCC 36239 / CBS 767 / BCRC 21394 / JCM 1990 / NBRC 0083 / IGC 2968)</name>
    <name type="common">Yeast</name>
    <name type="synonym">Torulaspora hansenii</name>
    <dbReference type="NCBI Taxonomy" id="284592"/>
    <lineage>
        <taxon>Eukaryota</taxon>
        <taxon>Fungi</taxon>
        <taxon>Dikarya</taxon>
        <taxon>Ascomycota</taxon>
        <taxon>Saccharomycotina</taxon>
        <taxon>Pichiomycetes</taxon>
        <taxon>Debaryomycetaceae</taxon>
        <taxon>Debaryomyces</taxon>
    </lineage>
</organism>
<sequence length="452" mass="49588">MTDNQYATEELNQLQKELVAKNPIDVLQFCANYFNSKLELQRSQLWQQQNKAKAAGINLFPSIDNVFNSDGGAIMTTNKRQPSFKSPFGDNDPTSIDHHHDDDPKEAPGASKQQNKAELFKGGFGVGKSTPSKPLQELDPNDPSHSASQDTDAAPPVPKSKIPVAFNANRRTSVSAEAMNPNKFKSDSWKPPINDLTAAQKVELSKTLGSNFLFRQLDVSSKKTVIEALGKKEFKNGDEIIKQGDEGDYFYIIEKGTVDFYVNGNQVNSSGEGSSFGELALMYNSPRAATAVAASDTGVTCWALDRQTFRRILLERTFNRRLMYEDFLKDVKVLSSLSSQERSKLADALSTEIYHKGDKIVKEGEQGENFYFIESGSCQVSKDGKGVLTKLSKGDYFGEVALLNDLPRQATVEALDTVIVATLGKSGFSRLLGPAVDILKSQDPTANQGSSN</sequence>
<name>KAPR_DEBHA</name>
<reference key="1">
    <citation type="journal article" date="2004" name="Nature">
        <title>Genome evolution in yeasts.</title>
        <authorList>
            <person name="Dujon B."/>
            <person name="Sherman D."/>
            <person name="Fischer G."/>
            <person name="Durrens P."/>
            <person name="Casaregola S."/>
            <person name="Lafontaine I."/>
            <person name="de Montigny J."/>
            <person name="Marck C."/>
            <person name="Neuveglise C."/>
            <person name="Talla E."/>
            <person name="Goffard N."/>
            <person name="Frangeul L."/>
            <person name="Aigle M."/>
            <person name="Anthouard V."/>
            <person name="Babour A."/>
            <person name="Barbe V."/>
            <person name="Barnay S."/>
            <person name="Blanchin S."/>
            <person name="Beckerich J.-M."/>
            <person name="Beyne E."/>
            <person name="Bleykasten C."/>
            <person name="Boisrame A."/>
            <person name="Boyer J."/>
            <person name="Cattolico L."/>
            <person name="Confanioleri F."/>
            <person name="de Daruvar A."/>
            <person name="Despons L."/>
            <person name="Fabre E."/>
            <person name="Fairhead C."/>
            <person name="Ferry-Dumazet H."/>
            <person name="Groppi A."/>
            <person name="Hantraye F."/>
            <person name="Hennequin C."/>
            <person name="Jauniaux N."/>
            <person name="Joyet P."/>
            <person name="Kachouri R."/>
            <person name="Kerrest A."/>
            <person name="Koszul R."/>
            <person name="Lemaire M."/>
            <person name="Lesur I."/>
            <person name="Ma L."/>
            <person name="Muller H."/>
            <person name="Nicaud J.-M."/>
            <person name="Nikolski M."/>
            <person name="Oztas S."/>
            <person name="Ozier-Kalogeropoulos O."/>
            <person name="Pellenz S."/>
            <person name="Potier S."/>
            <person name="Richard G.-F."/>
            <person name="Straub M.-L."/>
            <person name="Suleau A."/>
            <person name="Swennen D."/>
            <person name="Tekaia F."/>
            <person name="Wesolowski-Louvel M."/>
            <person name="Westhof E."/>
            <person name="Wirth B."/>
            <person name="Zeniou-Meyer M."/>
            <person name="Zivanovic Y."/>
            <person name="Bolotin-Fukuhara M."/>
            <person name="Thierry A."/>
            <person name="Bouchier C."/>
            <person name="Caudron B."/>
            <person name="Scarpelli C."/>
            <person name="Gaillardin C."/>
            <person name="Weissenbach J."/>
            <person name="Wincker P."/>
            <person name="Souciet J.-L."/>
        </authorList>
    </citation>
    <scope>NUCLEOTIDE SEQUENCE [LARGE SCALE GENOMIC DNA]</scope>
    <source>
        <strain>ATCC 36239 / CBS 767 / BCRC 21394 / JCM 1990 / NBRC 0083 / IGC 2968</strain>
    </source>
</reference>
<keyword id="KW-0114">cAMP</keyword>
<keyword id="KW-0116">cAMP-binding</keyword>
<keyword id="KW-0547">Nucleotide-binding</keyword>
<keyword id="KW-0597">Phosphoprotein</keyword>
<keyword id="KW-1185">Reference proteome</keyword>
<keyword id="KW-0677">Repeat</keyword>
<proteinExistence type="inferred from homology"/>
<evidence type="ECO:0000250" key="1"/>
<evidence type="ECO:0000255" key="2"/>
<evidence type="ECO:0000256" key="3">
    <source>
        <dbReference type="SAM" id="MobiDB-lite"/>
    </source>
</evidence>
<evidence type="ECO:0000305" key="4"/>
<gene>
    <name type="primary">PKAR</name>
    <name type="ordered locus">DEHA2A01474g</name>
</gene>